<protein>
    <recommendedName>
        <fullName>Nucleoprotein</fullName>
        <shortName>NP</shortName>
    </recommendedName>
    <alternativeName>
        <fullName>Nucleocapsid protein</fullName>
        <shortName>Protein N</shortName>
    </alternativeName>
</protein>
<organismHost>
    <name type="scientific">Cyprinus carpio</name>
    <name type="common">Common carp</name>
    <dbReference type="NCBI Taxonomy" id="7962"/>
</organismHost>
<dbReference type="EMBL" id="AJ318079">
    <property type="protein sequence ID" value="CAC51333.1"/>
    <property type="molecule type" value="Genomic_RNA"/>
</dbReference>
<dbReference type="PDB" id="7YG7">
    <property type="method" value="EM"/>
    <property type="resolution" value="3.70 A"/>
    <property type="chains" value="A/B/C/D/E/F/G/H/I/J/K=5-418"/>
</dbReference>
<dbReference type="PDBsum" id="7YG7"/>
<dbReference type="EMDB" id="EMD-33810"/>
<dbReference type="SMR" id="Q91DS3"/>
<dbReference type="Proteomes" id="UP000007541">
    <property type="component" value="Genome"/>
</dbReference>
<dbReference type="GO" id="GO:0019029">
    <property type="term" value="C:helical viral capsid"/>
    <property type="evidence" value="ECO:0007669"/>
    <property type="project" value="UniProtKB-KW"/>
</dbReference>
<dbReference type="GO" id="GO:0030430">
    <property type="term" value="C:host cell cytoplasm"/>
    <property type="evidence" value="ECO:0007669"/>
    <property type="project" value="UniProtKB-SubCell"/>
</dbReference>
<dbReference type="GO" id="GO:1990904">
    <property type="term" value="C:ribonucleoprotein complex"/>
    <property type="evidence" value="ECO:0007669"/>
    <property type="project" value="UniProtKB-KW"/>
</dbReference>
<dbReference type="GO" id="GO:0019013">
    <property type="term" value="C:viral nucleocapsid"/>
    <property type="evidence" value="ECO:0007669"/>
    <property type="project" value="UniProtKB-KW"/>
</dbReference>
<dbReference type="GO" id="GO:0003723">
    <property type="term" value="F:RNA binding"/>
    <property type="evidence" value="ECO:0007669"/>
    <property type="project" value="UniProtKB-KW"/>
</dbReference>
<dbReference type="Gene3D" id="1.10.3610.10">
    <property type="entry name" value="Nucleoprotein"/>
    <property type="match status" value="1"/>
</dbReference>
<dbReference type="Gene3D" id="1.10.3570.10">
    <property type="entry name" value="Rhabdovirus nucleocapsid protein like domain"/>
    <property type="match status" value="1"/>
</dbReference>
<dbReference type="InterPro" id="IPR000448">
    <property type="entry name" value="Rhabdo_ncapsid"/>
</dbReference>
<dbReference type="InterPro" id="IPR023331">
    <property type="entry name" value="Rhabdovirus_ncapsid_C"/>
</dbReference>
<dbReference type="InterPro" id="IPR023330">
    <property type="entry name" value="Rhabdovirus_ncapsid_N"/>
</dbReference>
<dbReference type="InterPro" id="IPR035961">
    <property type="entry name" value="Rhabdovirus_nucleoprotein-like"/>
</dbReference>
<dbReference type="Pfam" id="PF00945">
    <property type="entry name" value="Rhabdo_ncap"/>
    <property type="match status" value="1"/>
</dbReference>
<dbReference type="SUPFAM" id="SSF140809">
    <property type="entry name" value="Rhabdovirus nucleoprotein-like"/>
    <property type="match status" value="1"/>
</dbReference>
<evidence type="ECO:0000250" key="1">
    <source>
        <dbReference type="UniProtKB" id="P03521"/>
    </source>
</evidence>
<proteinExistence type="evidence at protein level"/>
<feature type="chain" id="PRO_0000287267" description="Nucleoprotein">
    <location>
        <begin position="1"/>
        <end position="418"/>
    </location>
</feature>
<organism>
    <name type="scientific">Spring viremia of carp virus</name>
    <name type="common">Rhabdovirus carpia</name>
    <dbReference type="NCBI Taxonomy" id="696863"/>
    <lineage>
        <taxon>Viruses</taxon>
        <taxon>Riboviria</taxon>
        <taxon>Orthornavirae</taxon>
        <taxon>Negarnaviricota</taxon>
        <taxon>Haploviricotina</taxon>
        <taxon>Monjiviricetes</taxon>
        <taxon>Mononegavirales</taxon>
        <taxon>Rhabdoviridae</taxon>
        <taxon>Alpharhabdovirinae</taxon>
        <taxon>Sprivivirus</taxon>
    </lineage>
</organism>
<comment type="function">
    <text evidence="1">Encapsidates the genome, protecting it from nucleases. The encapsidated genomic RNA is termed the NC and serves as template for transcription and replication. Nucleocapsid assembly is concomitant with replication, therefore viral replication depends on the intracellular concentration of free N, termed N(0). All replicative products are resistant to nucleases.</text>
</comment>
<comment type="subunit">
    <text evidence="1">Homomultimerizes to form the nucleocapsid. Binds to viral genomic RNA. N in nucleocapsid binds the P protein and thereby positions the polymerase on the template. Interaction of N(0) with the P protein prevents the uncontrolled aggregation of N(0).</text>
</comment>
<comment type="subcellular location">
    <subcellularLocation>
        <location>Virion</location>
    </subcellularLocation>
    <subcellularLocation>
        <location>Host cytoplasm</location>
    </subcellularLocation>
    <text evidence="1">The nucleocapsid is synthesized in the cytoplasm, and is subsequently transported via microtubules to the cell periphery.</text>
</comment>
<accession>Q91DS3</accession>
<sequence>MSVIRIKTNATVVAVLPASEDQADYPSTFFEGGNEIRLYVNKEEKLDVLRQYVYMGLVEKNCKIQHVNAYLYAVLKGERELLEADWDSFGHKIGIRGEKIGPFNLVRVEDIPDGLPDGKLNAEVSAEDDAWLPLFLLGLYRVGRASETAYRTLLMESLIKQCKAIKSDWVSPVTATHKYFDVWGNDGNYLKIVACVDMFYNHFKKSIKATFRWGTIVSRFKDCAALATLGHVVKITGLTIEEVFTWVLQTEVAEELVKMMKPGQEIDNSSSYMPYLIDMGISAKSPYSTIKNPSFHFWGQLVAALCRSKRALNARQPDEIDSMSISNASLLMAYALGSSPDIEQQFSTGDTYRKPPKEASYLVSEEPKSRSVVEWIAWYSDVDNKPTDDMLMMAKRVAGTISGPRDNSVGKWIKQTYG</sequence>
<reference key="1">
    <citation type="journal article" date="2002" name="Virus Res.">
        <title>Determination of the complete genomic sequence and analysis of the gene products of the virus of Spring Viremia of Carp, a fish rhabdovirus.</title>
        <authorList>
            <person name="Hoffmann B."/>
            <person name="Schutze H."/>
            <person name="Mettenleiter T.C."/>
        </authorList>
    </citation>
    <scope>NUCLEOTIDE SEQUENCE [GENOMIC RNA]</scope>
    <source>
        <strain>Fijan reference</strain>
    </source>
</reference>
<keyword id="KW-0002">3D-structure</keyword>
<keyword id="KW-0167">Capsid protein</keyword>
<keyword id="KW-1139">Helical capsid protein</keyword>
<keyword id="KW-1035">Host cytoplasm</keyword>
<keyword id="KW-1185">Reference proteome</keyword>
<keyword id="KW-0687">Ribonucleoprotein</keyword>
<keyword id="KW-0694">RNA-binding</keyword>
<keyword id="KW-0543">Viral nucleoprotein</keyword>
<keyword id="KW-0693">Viral RNA replication</keyword>
<keyword id="KW-0946">Virion</keyword>
<name>NCAP_SVCV</name>
<gene>
    <name type="primary">N</name>
</gene>